<gene>
    <name evidence="1" type="primary">psmB1</name>
    <name type="ordered locus">Kcr_1410</name>
</gene>
<accession>B1L6S7</accession>
<evidence type="ECO:0000255" key="1">
    <source>
        <dbReference type="HAMAP-Rule" id="MF_02113"/>
    </source>
</evidence>
<comment type="function">
    <text evidence="1">Component of the proteasome core, a large protease complex with broad specificity involved in protein degradation.</text>
</comment>
<comment type="catalytic activity">
    <reaction evidence="1">
        <text>Cleavage of peptide bonds with very broad specificity.</text>
        <dbReference type="EC" id="3.4.25.1"/>
    </reaction>
</comment>
<comment type="activity regulation">
    <text evidence="1">The formation of the proteasomal ATPase PAN-20S proteasome complex, via the docking of the C-termini of PAN into the intersubunit pockets in the alpha-rings, triggers opening of the gate for substrate entry. Interconversion between the open-gate and close-gate conformations leads to a dynamic regulation of the 20S proteasome proteolysis activity.</text>
</comment>
<comment type="subunit">
    <text evidence="1">The 20S proteasome core is composed of 14 alpha and 14 beta subunits that assemble into four stacked heptameric rings, resulting in a barrel-shaped structure. The two inner rings, each composed of seven catalytic beta subunits, are sandwiched by two outer rings, each composed of seven alpha subunits. The catalytic chamber with the active sites is on the inside of the barrel. Has a gated structure, the ends of the cylinder being occluded by the N-termini of the alpha-subunits. Is capped at one or both ends by the proteasome regulatory ATPase, PAN.</text>
</comment>
<comment type="subcellular location">
    <subcellularLocation>
        <location evidence="1">Cytoplasm</location>
    </subcellularLocation>
</comment>
<comment type="similarity">
    <text evidence="1">Belongs to the peptidase T1B family.</text>
</comment>
<sequence length="206" mass="22209">MLMKGTTTVGVKFKNGVIVASDKRATSGTFVASKSAVKTLKITDYAVATISGLVADGQYLVNNVRTIADLYSLDTERPLSVRGIARILAFLLRRYRPYFLLAQLIVGGVDREGAHLFNVDPFGTLTEEDYLATGSGSPVAISVIESGYSPDMDRESALRLVISSMTAALSRDAATGDGIDVVVIDDRGVNFLSREEISDLVREVLR</sequence>
<dbReference type="EC" id="3.4.25.1" evidence="1"/>
<dbReference type="EMBL" id="CP000968">
    <property type="protein sequence ID" value="ACB08156.1"/>
    <property type="molecule type" value="Genomic_DNA"/>
</dbReference>
<dbReference type="RefSeq" id="WP_012310053.1">
    <property type="nucleotide sequence ID" value="NC_010482.1"/>
</dbReference>
<dbReference type="SMR" id="B1L6S7"/>
<dbReference type="FunCoup" id="B1L6S7">
    <property type="interactions" value="158"/>
</dbReference>
<dbReference type="STRING" id="374847.Kcr_1410"/>
<dbReference type="MEROPS" id="T01.002"/>
<dbReference type="EnsemblBacteria" id="ACB08156">
    <property type="protein sequence ID" value="ACB08156"/>
    <property type="gene ID" value="Kcr_1410"/>
</dbReference>
<dbReference type="GeneID" id="6094687"/>
<dbReference type="KEGG" id="kcr:Kcr_1410"/>
<dbReference type="eggNOG" id="arCOG00970">
    <property type="taxonomic scope" value="Archaea"/>
</dbReference>
<dbReference type="HOGENOM" id="CLU_035750_7_2_2"/>
<dbReference type="InParanoid" id="B1L6S7"/>
<dbReference type="OrthoDB" id="6330at2157"/>
<dbReference type="PhylomeDB" id="B1L6S7"/>
<dbReference type="Proteomes" id="UP000001686">
    <property type="component" value="Chromosome"/>
</dbReference>
<dbReference type="GO" id="GO:0005829">
    <property type="term" value="C:cytosol"/>
    <property type="evidence" value="ECO:0000318"/>
    <property type="project" value="GO_Central"/>
</dbReference>
<dbReference type="GO" id="GO:0019774">
    <property type="term" value="C:proteasome core complex, beta-subunit complex"/>
    <property type="evidence" value="ECO:0000318"/>
    <property type="project" value="GO_Central"/>
</dbReference>
<dbReference type="GO" id="GO:0004175">
    <property type="term" value="F:endopeptidase activity"/>
    <property type="evidence" value="ECO:0000318"/>
    <property type="project" value="GO_Central"/>
</dbReference>
<dbReference type="GO" id="GO:0004298">
    <property type="term" value="F:threonine-type endopeptidase activity"/>
    <property type="evidence" value="ECO:0007669"/>
    <property type="project" value="UniProtKB-UniRule"/>
</dbReference>
<dbReference type="GO" id="GO:0043161">
    <property type="term" value="P:proteasome-mediated ubiquitin-dependent protein catabolic process"/>
    <property type="evidence" value="ECO:0000318"/>
    <property type="project" value="GO_Central"/>
</dbReference>
<dbReference type="Gene3D" id="3.60.20.10">
    <property type="entry name" value="Glutamine Phosphoribosylpyrophosphate, subunit 1, domain 1"/>
    <property type="match status" value="1"/>
</dbReference>
<dbReference type="HAMAP" id="MF_02113_A">
    <property type="entry name" value="Proteasome_B_A"/>
    <property type="match status" value="1"/>
</dbReference>
<dbReference type="InterPro" id="IPR029055">
    <property type="entry name" value="Ntn_hydrolases_N"/>
</dbReference>
<dbReference type="InterPro" id="IPR019983">
    <property type="entry name" value="Pept_T1A_Psome_bsu_arc"/>
</dbReference>
<dbReference type="InterPro" id="IPR000243">
    <property type="entry name" value="Pept_T1A_subB"/>
</dbReference>
<dbReference type="InterPro" id="IPR016050">
    <property type="entry name" value="Proteasome_bsu_CS"/>
</dbReference>
<dbReference type="InterPro" id="IPR001353">
    <property type="entry name" value="Proteasome_sua/b"/>
</dbReference>
<dbReference type="InterPro" id="IPR023333">
    <property type="entry name" value="Proteasome_suB-type"/>
</dbReference>
<dbReference type="PANTHER" id="PTHR32194:SF0">
    <property type="entry name" value="ATP-DEPENDENT PROTEASE SUBUNIT HSLV"/>
    <property type="match status" value="1"/>
</dbReference>
<dbReference type="PANTHER" id="PTHR32194">
    <property type="entry name" value="METALLOPROTEASE TLDD"/>
    <property type="match status" value="1"/>
</dbReference>
<dbReference type="Pfam" id="PF00227">
    <property type="entry name" value="Proteasome"/>
    <property type="match status" value="1"/>
</dbReference>
<dbReference type="PRINTS" id="PR00141">
    <property type="entry name" value="PROTEASOME"/>
</dbReference>
<dbReference type="SUPFAM" id="SSF56235">
    <property type="entry name" value="N-terminal nucleophile aminohydrolases (Ntn hydrolases)"/>
    <property type="match status" value="1"/>
</dbReference>
<dbReference type="PROSITE" id="PS00854">
    <property type="entry name" value="PROTEASOME_BETA_1"/>
    <property type="match status" value="1"/>
</dbReference>
<dbReference type="PROSITE" id="PS51476">
    <property type="entry name" value="PROTEASOME_BETA_2"/>
    <property type="match status" value="1"/>
</dbReference>
<protein>
    <recommendedName>
        <fullName evidence="1">Proteasome subunit beta 1</fullName>
        <ecNumber evidence="1">3.4.25.1</ecNumber>
    </recommendedName>
    <alternativeName>
        <fullName evidence="1">20S proteasome beta subunit 1</fullName>
    </alternativeName>
    <alternativeName>
        <fullName evidence="1">Proteasome core protein PsmB 1</fullName>
    </alternativeName>
</protein>
<organism>
    <name type="scientific">Korarchaeum cryptofilum (strain OPF8)</name>
    <dbReference type="NCBI Taxonomy" id="374847"/>
    <lineage>
        <taxon>Archaea</taxon>
        <taxon>Thermoproteota</taxon>
        <taxon>Candidatus Korarchaeia</taxon>
        <taxon>Candidatus Korarchaeales</taxon>
        <taxon>Candidatus Korarchaeaceae</taxon>
        <taxon>Candidatus Korarchaeum</taxon>
    </lineage>
</organism>
<proteinExistence type="inferred from homology"/>
<keyword id="KW-0068">Autocatalytic cleavage</keyword>
<keyword id="KW-0963">Cytoplasm</keyword>
<keyword id="KW-0378">Hydrolase</keyword>
<keyword id="KW-0645">Protease</keyword>
<keyword id="KW-0647">Proteasome</keyword>
<keyword id="KW-1185">Reference proteome</keyword>
<keyword id="KW-0888">Threonine protease</keyword>
<keyword id="KW-0865">Zymogen</keyword>
<feature type="propeptide" id="PRO_0000397322" description="Removed in mature form; by autocatalysis" evidence="1">
    <location>
        <begin position="1"/>
        <end position="5"/>
    </location>
</feature>
<feature type="chain" id="PRO_0000397323" description="Proteasome subunit beta 1">
    <location>
        <begin position="6"/>
        <end position="206"/>
    </location>
</feature>
<feature type="active site" description="Nucleophile" evidence="1">
    <location>
        <position position="6"/>
    </location>
</feature>
<reference key="1">
    <citation type="journal article" date="2008" name="Proc. Natl. Acad. Sci. U.S.A.">
        <title>A korarchaeal genome reveals new insights into the evolution of the Archaea.</title>
        <authorList>
            <person name="Elkins J.G."/>
            <person name="Podar M."/>
            <person name="Graham D.E."/>
            <person name="Makarova K.S."/>
            <person name="Wolf Y."/>
            <person name="Randau L."/>
            <person name="Hedlund B.P."/>
            <person name="Brochier-Armanet C."/>
            <person name="Kunin V."/>
            <person name="Anderson I."/>
            <person name="Lapidus A."/>
            <person name="Goltsman E."/>
            <person name="Barry K."/>
            <person name="Koonin E.V."/>
            <person name="Hugenholtz P."/>
            <person name="Kyrpides N."/>
            <person name="Wanner G."/>
            <person name="Richardson P."/>
            <person name="Keller M."/>
            <person name="Stetter K.O."/>
        </authorList>
    </citation>
    <scope>NUCLEOTIDE SEQUENCE [LARGE SCALE GENOMIC DNA]</scope>
    <source>
        <strain>OPF8</strain>
    </source>
</reference>
<name>PSB1_KORCO</name>